<accession>Q6GBQ6</accession>
<name>UNG_STAAS</name>
<evidence type="ECO:0000255" key="1">
    <source>
        <dbReference type="HAMAP-Rule" id="MF_00148"/>
    </source>
</evidence>
<keyword id="KW-0963">Cytoplasm</keyword>
<keyword id="KW-0227">DNA damage</keyword>
<keyword id="KW-0234">DNA repair</keyword>
<keyword id="KW-0378">Hydrolase</keyword>
<comment type="function">
    <text evidence="1">Excises uracil residues from the DNA which can arise as a result of misincorporation of dUMP residues by DNA polymerase or due to deamination of cytosine.</text>
</comment>
<comment type="catalytic activity">
    <reaction evidence="1">
        <text>Hydrolyzes single-stranded DNA or mismatched double-stranded DNA and polynucleotides, releasing free uracil.</text>
        <dbReference type="EC" id="3.2.2.27"/>
    </reaction>
</comment>
<comment type="subcellular location">
    <subcellularLocation>
        <location evidence="1">Cytoplasm</location>
    </subcellularLocation>
</comment>
<comment type="similarity">
    <text evidence="1">Belongs to the uracil-DNA glycosylase (UDG) superfamily. UNG family.</text>
</comment>
<protein>
    <recommendedName>
        <fullName evidence="1">Uracil-DNA glycosylase</fullName>
        <shortName evidence="1">UDG</shortName>
        <ecNumber evidence="1">3.2.2.27</ecNumber>
    </recommendedName>
</protein>
<reference key="1">
    <citation type="journal article" date="2004" name="Proc. Natl. Acad. Sci. U.S.A.">
        <title>Complete genomes of two clinical Staphylococcus aureus strains: evidence for the rapid evolution of virulence and drug resistance.</title>
        <authorList>
            <person name="Holden M.T.G."/>
            <person name="Feil E.J."/>
            <person name="Lindsay J.A."/>
            <person name="Peacock S.J."/>
            <person name="Day N.P.J."/>
            <person name="Enright M.C."/>
            <person name="Foster T.J."/>
            <person name="Moore C.E."/>
            <person name="Hurst L."/>
            <person name="Atkin R."/>
            <person name="Barron A."/>
            <person name="Bason N."/>
            <person name="Bentley S.D."/>
            <person name="Chillingworth C."/>
            <person name="Chillingworth T."/>
            <person name="Churcher C."/>
            <person name="Clark L."/>
            <person name="Corton C."/>
            <person name="Cronin A."/>
            <person name="Doggett J."/>
            <person name="Dowd L."/>
            <person name="Feltwell T."/>
            <person name="Hance Z."/>
            <person name="Harris B."/>
            <person name="Hauser H."/>
            <person name="Holroyd S."/>
            <person name="Jagels K."/>
            <person name="James K.D."/>
            <person name="Lennard N."/>
            <person name="Line A."/>
            <person name="Mayes R."/>
            <person name="Moule S."/>
            <person name="Mungall K."/>
            <person name="Ormond D."/>
            <person name="Quail M.A."/>
            <person name="Rabbinowitsch E."/>
            <person name="Rutherford K.M."/>
            <person name="Sanders M."/>
            <person name="Sharp S."/>
            <person name="Simmonds M."/>
            <person name="Stevens K."/>
            <person name="Whitehead S."/>
            <person name="Barrell B.G."/>
            <person name="Spratt B.G."/>
            <person name="Parkhill J."/>
        </authorList>
    </citation>
    <scope>NUCLEOTIDE SEQUENCE [LARGE SCALE GENOMIC DNA]</scope>
    <source>
        <strain>MSSA476</strain>
    </source>
</reference>
<proteinExistence type="inferred from homology"/>
<dbReference type="EC" id="3.2.2.27" evidence="1"/>
<dbReference type="EMBL" id="BX571857">
    <property type="protein sequence ID" value="CAG42314.1"/>
    <property type="molecule type" value="Genomic_DNA"/>
</dbReference>
<dbReference type="RefSeq" id="WP_000455255.1">
    <property type="nucleotide sequence ID" value="NC_002953.3"/>
</dbReference>
<dbReference type="SMR" id="Q6GBQ6"/>
<dbReference type="KEGG" id="sas:SAS0539"/>
<dbReference type="HOGENOM" id="CLU_032162_3_1_9"/>
<dbReference type="GO" id="GO:0005737">
    <property type="term" value="C:cytoplasm"/>
    <property type="evidence" value="ECO:0007669"/>
    <property type="project" value="UniProtKB-SubCell"/>
</dbReference>
<dbReference type="GO" id="GO:0004844">
    <property type="term" value="F:uracil DNA N-glycosylase activity"/>
    <property type="evidence" value="ECO:0007669"/>
    <property type="project" value="UniProtKB-UniRule"/>
</dbReference>
<dbReference type="GO" id="GO:0097510">
    <property type="term" value="P:base-excision repair, AP site formation via deaminated base removal"/>
    <property type="evidence" value="ECO:0007669"/>
    <property type="project" value="TreeGrafter"/>
</dbReference>
<dbReference type="CDD" id="cd10027">
    <property type="entry name" value="UDG-F1-like"/>
    <property type="match status" value="1"/>
</dbReference>
<dbReference type="FunFam" id="3.40.470.10:FF:000001">
    <property type="entry name" value="Uracil-DNA glycosylase"/>
    <property type="match status" value="1"/>
</dbReference>
<dbReference type="Gene3D" id="3.40.470.10">
    <property type="entry name" value="Uracil-DNA glycosylase-like domain"/>
    <property type="match status" value="1"/>
</dbReference>
<dbReference type="HAMAP" id="MF_00148">
    <property type="entry name" value="UDG"/>
    <property type="match status" value="1"/>
</dbReference>
<dbReference type="InterPro" id="IPR002043">
    <property type="entry name" value="UDG_fam1"/>
</dbReference>
<dbReference type="InterPro" id="IPR018085">
    <property type="entry name" value="Ura-DNA_Glyclase_AS"/>
</dbReference>
<dbReference type="InterPro" id="IPR005122">
    <property type="entry name" value="Uracil-DNA_glycosylase-like"/>
</dbReference>
<dbReference type="InterPro" id="IPR036895">
    <property type="entry name" value="Uracil-DNA_glycosylase-like_sf"/>
</dbReference>
<dbReference type="NCBIfam" id="NF003588">
    <property type="entry name" value="PRK05254.1-1"/>
    <property type="match status" value="1"/>
</dbReference>
<dbReference type="NCBIfam" id="NF003589">
    <property type="entry name" value="PRK05254.1-2"/>
    <property type="match status" value="1"/>
</dbReference>
<dbReference type="NCBIfam" id="NF003591">
    <property type="entry name" value="PRK05254.1-4"/>
    <property type="match status" value="1"/>
</dbReference>
<dbReference type="NCBIfam" id="NF003592">
    <property type="entry name" value="PRK05254.1-5"/>
    <property type="match status" value="1"/>
</dbReference>
<dbReference type="NCBIfam" id="TIGR00628">
    <property type="entry name" value="ung"/>
    <property type="match status" value="1"/>
</dbReference>
<dbReference type="PANTHER" id="PTHR11264">
    <property type="entry name" value="URACIL-DNA GLYCOSYLASE"/>
    <property type="match status" value="1"/>
</dbReference>
<dbReference type="PANTHER" id="PTHR11264:SF0">
    <property type="entry name" value="URACIL-DNA GLYCOSYLASE"/>
    <property type="match status" value="1"/>
</dbReference>
<dbReference type="Pfam" id="PF03167">
    <property type="entry name" value="UDG"/>
    <property type="match status" value="1"/>
</dbReference>
<dbReference type="SMART" id="SM00986">
    <property type="entry name" value="UDG"/>
    <property type="match status" value="1"/>
</dbReference>
<dbReference type="SMART" id="SM00987">
    <property type="entry name" value="UreE_C"/>
    <property type="match status" value="1"/>
</dbReference>
<dbReference type="SUPFAM" id="SSF52141">
    <property type="entry name" value="Uracil-DNA glycosylase-like"/>
    <property type="match status" value="1"/>
</dbReference>
<dbReference type="PROSITE" id="PS00130">
    <property type="entry name" value="U_DNA_GLYCOSYLASE"/>
    <property type="match status" value="1"/>
</dbReference>
<feature type="chain" id="PRO_0000176140" description="Uracil-DNA glycosylase">
    <location>
        <begin position="1"/>
        <end position="218"/>
    </location>
</feature>
<feature type="active site" description="Proton acceptor" evidence="1">
    <location>
        <position position="59"/>
    </location>
</feature>
<sequence length="218" mass="24963">MEWSQIFHDITTKHDFKAMHDFLEKEYSTAIVYPDRENIYQAFDLTPFENIKVVILGQDPYHGPNQAHGLAFSVQPNAKFPPSLRNMYKELADDIGCVRQTPHLQDWAREGVLLLNTVLTVRQGEANSHRDIGWETFTDEIIKAVSDYKEHVVFILWGKPAQQKIKLIDTSKHCIIKSVHPSPLSAYRGFFGSKPYSKANAYLESVGKLPINWCESEA</sequence>
<gene>
    <name evidence="1" type="primary">ung</name>
    <name type="ordered locus">SAS0539</name>
</gene>
<organism>
    <name type="scientific">Staphylococcus aureus (strain MSSA476)</name>
    <dbReference type="NCBI Taxonomy" id="282459"/>
    <lineage>
        <taxon>Bacteria</taxon>
        <taxon>Bacillati</taxon>
        <taxon>Bacillota</taxon>
        <taxon>Bacilli</taxon>
        <taxon>Bacillales</taxon>
        <taxon>Staphylococcaceae</taxon>
        <taxon>Staphylococcus</taxon>
    </lineage>
</organism>